<feature type="chain" id="PRO_0000055750" description="Anaphase-promoting complex subunit 11">
    <location>
        <begin position="1"/>
        <end position="94"/>
    </location>
</feature>
<feature type="zinc finger region" description="RING-type" evidence="1">
    <location>
        <begin position="35"/>
        <end position="78"/>
    </location>
</feature>
<accession>Q9UT86</accession>
<accession>P79054</accession>
<protein>
    <recommendedName>
        <fullName>Anaphase-promoting complex subunit 11</fullName>
    </recommendedName>
    <alternativeName>
        <fullName>20S cyclosome/APC complex protein apc11</fullName>
    </alternativeName>
</protein>
<comment type="function">
    <text>Component of the anaphase-promoting complex/cyclosome (APC/C), a cell cycle-regulated E3 ubiquitin-protein ligase complex that controls progression through mitosis and the G1 phase of the cell cycle. The APC/C is thought to confer substrate specificity and, in the presence of ubiquitin-conjugating E2 enzymes, it catalyzes the formation of protein-ubiquitin conjugates that are subsequently degraded by the 26S proteasome.</text>
</comment>
<comment type="subunit">
    <text evidence="2">The APC/C is composed of at least 13 subunits: apc1, apc2, nuc2, apc4, apc5, cut9, apc8, apc10, apc11, hcn1, apc13, apc14 and apc15.</text>
</comment>
<comment type="sequence caution" evidence="3">
    <conflict type="frameshift">
        <sequence resource="EMBL-CDS" id="BAA19216"/>
    </conflict>
</comment>
<evidence type="ECO:0000255" key="1">
    <source>
        <dbReference type="PROSITE-ProRule" id="PRU00175"/>
    </source>
</evidence>
<evidence type="ECO:0000269" key="2">
    <source>
    </source>
</evidence>
<evidence type="ECO:0000305" key="3"/>
<dbReference type="EMBL" id="AB001022">
    <property type="protein sequence ID" value="BAA19216.1"/>
    <property type="status" value="ALT_SEQ"/>
    <property type="molecule type" value="mRNA"/>
</dbReference>
<dbReference type="EMBL" id="CU329670">
    <property type="protein sequence ID" value="CAB52266.1"/>
    <property type="molecule type" value="Genomic_DNA"/>
</dbReference>
<dbReference type="PIR" id="T38652">
    <property type="entry name" value="T38652"/>
</dbReference>
<dbReference type="RefSeq" id="NP_593423.1">
    <property type="nucleotide sequence ID" value="NM_001018856.2"/>
</dbReference>
<dbReference type="SMR" id="Q9UT86"/>
<dbReference type="BioGRID" id="279616">
    <property type="interactions" value="9"/>
</dbReference>
<dbReference type="ComplexPortal" id="CPX-763">
    <property type="entry name" value="Anaphase-promoting complex"/>
</dbReference>
<dbReference type="ComplexPortal" id="CPX-764">
    <property type="entry name" value="Anaphase-promoting complex, slp1 variant"/>
</dbReference>
<dbReference type="ComplexPortal" id="CPX-765">
    <property type="entry name" value="Anaphase-promoting complex, srw1 variant"/>
</dbReference>
<dbReference type="ComplexPortal" id="CPX-766">
    <property type="entry name" value="Anaphase-promoting complex, mfr1 variant"/>
</dbReference>
<dbReference type="FunCoup" id="Q9UT86">
    <property type="interactions" value="469"/>
</dbReference>
<dbReference type="IntAct" id="Q9UT86">
    <property type="interactions" value="2"/>
</dbReference>
<dbReference type="STRING" id="284812.Q9UT86"/>
<dbReference type="SwissPalm" id="Q9UT86"/>
<dbReference type="PaxDb" id="4896-SPAC343.03.1"/>
<dbReference type="EnsemblFungi" id="SPAC343.03.1">
    <property type="protein sequence ID" value="SPAC343.03.1:pep"/>
    <property type="gene ID" value="SPAC343.03"/>
</dbReference>
<dbReference type="GeneID" id="2543187"/>
<dbReference type="KEGG" id="spo:2543187"/>
<dbReference type="PomBase" id="SPAC343.03">
    <property type="gene designation" value="apc11"/>
</dbReference>
<dbReference type="VEuPathDB" id="FungiDB:SPAC343.03"/>
<dbReference type="eggNOG" id="KOG1493">
    <property type="taxonomic scope" value="Eukaryota"/>
</dbReference>
<dbReference type="HOGENOM" id="CLU_115512_0_1_1"/>
<dbReference type="InParanoid" id="Q9UT86"/>
<dbReference type="OMA" id="QWRWDTG"/>
<dbReference type="PhylomeDB" id="Q9UT86"/>
<dbReference type="Reactome" id="R-SPO-983168">
    <property type="pathway name" value="Antigen processing: Ubiquitination &amp; Proteasome degradation"/>
</dbReference>
<dbReference type="PRO" id="PR:Q9UT86"/>
<dbReference type="Proteomes" id="UP000002485">
    <property type="component" value="Chromosome I"/>
</dbReference>
<dbReference type="GO" id="GO:0005680">
    <property type="term" value="C:anaphase-promoting complex"/>
    <property type="evidence" value="ECO:0000314"/>
    <property type="project" value="PomBase"/>
</dbReference>
<dbReference type="GO" id="GO:0005634">
    <property type="term" value="C:nucleus"/>
    <property type="evidence" value="ECO:0000318"/>
    <property type="project" value="GO_Central"/>
</dbReference>
<dbReference type="GO" id="GO:0097602">
    <property type="term" value="F:cullin family protein binding"/>
    <property type="evidence" value="ECO:0000318"/>
    <property type="project" value="GO_Central"/>
</dbReference>
<dbReference type="GO" id="GO:0061630">
    <property type="term" value="F:ubiquitin protein ligase activity"/>
    <property type="evidence" value="ECO:0000318"/>
    <property type="project" value="GO_Central"/>
</dbReference>
<dbReference type="GO" id="GO:0008270">
    <property type="term" value="F:zinc ion binding"/>
    <property type="evidence" value="ECO:0007669"/>
    <property type="project" value="UniProtKB-KW"/>
</dbReference>
<dbReference type="GO" id="GO:0031145">
    <property type="term" value="P:anaphase-promoting complex-dependent catabolic process"/>
    <property type="evidence" value="ECO:0007669"/>
    <property type="project" value="InterPro"/>
</dbReference>
<dbReference type="GO" id="GO:0051301">
    <property type="term" value="P:cell division"/>
    <property type="evidence" value="ECO:0007669"/>
    <property type="project" value="UniProtKB-KW"/>
</dbReference>
<dbReference type="GO" id="GO:0045842">
    <property type="term" value="P:positive regulation of mitotic metaphase/anaphase transition"/>
    <property type="evidence" value="ECO:0000318"/>
    <property type="project" value="GO_Central"/>
</dbReference>
<dbReference type="GO" id="GO:1901970">
    <property type="term" value="P:positive regulation of mitotic sister chromatid separation"/>
    <property type="evidence" value="ECO:0000305"/>
    <property type="project" value="PomBase"/>
</dbReference>
<dbReference type="GO" id="GO:0016567">
    <property type="term" value="P:protein ubiquitination"/>
    <property type="evidence" value="ECO:0000318"/>
    <property type="project" value="GO_Central"/>
</dbReference>
<dbReference type="GO" id="GO:0006511">
    <property type="term" value="P:ubiquitin-dependent protein catabolic process"/>
    <property type="evidence" value="ECO:0000318"/>
    <property type="project" value="GO_Central"/>
</dbReference>
<dbReference type="CDD" id="cd16456">
    <property type="entry name" value="RING-H2_APC11"/>
    <property type="match status" value="1"/>
</dbReference>
<dbReference type="FunFam" id="3.30.40.10:FF:000460">
    <property type="entry name" value="Anaphase promoting complex subunit 11"/>
    <property type="match status" value="1"/>
</dbReference>
<dbReference type="Gene3D" id="3.30.40.10">
    <property type="entry name" value="Zinc/RING finger domain, C3HC4 (zinc finger)"/>
    <property type="match status" value="1"/>
</dbReference>
<dbReference type="InterPro" id="IPR051031">
    <property type="entry name" value="RING-box_E3_Ubiquitin_Ligase"/>
</dbReference>
<dbReference type="InterPro" id="IPR024991">
    <property type="entry name" value="RING-H2_APC11"/>
</dbReference>
<dbReference type="InterPro" id="IPR001841">
    <property type="entry name" value="Znf_RING"/>
</dbReference>
<dbReference type="InterPro" id="IPR013083">
    <property type="entry name" value="Znf_RING/FYVE/PHD"/>
</dbReference>
<dbReference type="PANTHER" id="PTHR11210">
    <property type="entry name" value="RING BOX"/>
    <property type="match status" value="1"/>
</dbReference>
<dbReference type="Pfam" id="PF12861">
    <property type="entry name" value="zf-ANAPC11"/>
    <property type="match status" value="1"/>
</dbReference>
<dbReference type="SUPFAM" id="SSF57850">
    <property type="entry name" value="RING/U-box"/>
    <property type="match status" value="1"/>
</dbReference>
<dbReference type="PROSITE" id="PS50089">
    <property type="entry name" value="ZF_RING_2"/>
    <property type="match status" value="1"/>
</dbReference>
<sequence>MKVKILRYHAIANWTWDTPKDDVCGICRVPFDGCCPQCTSPGDNCPIVWGKCKHIFHAHCIQNWLATSGSQGQCPMDRQTFVVADSTNEKSETQ</sequence>
<reference key="1">
    <citation type="journal article" date="1997" name="DNA Res.">
        <title>Identification of open reading frames in Schizosaccharomyces pombe cDNAs.</title>
        <authorList>
            <person name="Yoshioka S."/>
            <person name="Kato K."/>
            <person name="Nakai K."/>
            <person name="Okayama H."/>
            <person name="Nojima H."/>
        </authorList>
    </citation>
    <scope>NUCLEOTIDE SEQUENCE [LARGE SCALE MRNA]</scope>
    <source>
        <strain>PR745</strain>
    </source>
</reference>
<reference key="2">
    <citation type="journal article" date="2002" name="Nature">
        <title>The genome sequence of Schizosaccharomyces pombe.</title>
        <authorList>
            <person name="Wood V."/>
            <person name="Gwilliam R."/>
            <person name="Rajandream M.A."/>
            <person name="Lyne M.H."/>
            <person name="Lyne R."/>
            <person name="Stewart A."/>
            <person name="Sgouros J.G."/>
            <person name="Peat N."/>
            <person name="Hayles J."/>
            <person name="Baker S.G."/>
            <person name="Basham D."/>
            <person name="Bowman S."/>
            <person name="Brooks K."/>
            <person name="Brown D."/>
            <person name="Brown S."/>
            <person name="Chillingworth T."/>
            <person name="Churcher C.M."/>
            <person name="Collins M."/>
            <person name="Connor R."/>
            <person name="Cronin A."/>
            <person name="Davis P."/>
            <person name="Feltwell T."/>
            <person name="Fraser A."/>
            <person name="Gentles S."/>
            <person name="Goble A."/>
            <person name="Hamlin N."/>
            <person name="Harris D.E."/>
            <person name="Hidalgo J."/>
            <person name="Hodgson G."/>
            <person name="Holroyd S."/>
            <person name="Hornsby T."/>
            <person name="Howarth S."/>
            <person name="Huckle E.J."/>
            <person name="Hunt S."/>
            <person name="Jagels K."/>
            <person name="James K.D."/>
            <person name="Jones L."/>
            <person name="Jones M."/>
            <person name="Leather S."/>
            <person name="McDonald S."/>
            <person name="McLean J."/>
            <person name="Mooney P."/>
            <person name="Moule S."/>
            <person name="Mungall K.L."/>
            <person name="Murphy L.D."/>
            <person name="Niblett D."/>
            <person name="Odell C."/>
            <person name="Oliver K."/>
            <person name="O'Neil S."/>
            <person name="Pearson D."/>
            <person name="Quail M.A."/>
            <person name="Rabbinowitsch E."/>
            <person name="Rutherford K.M."/>
            <person name="Rutter S."/>
            <person name="Saunders D."/>
            <person name="Seeger K."/>
            <person name="Sharp S."/>
            <person name="Skelton J."/>
            <person name="Simmonds M.N."/>
            <person name="Squares R."/>
            <person name="Squares S."/>
            <person name="Stevens K."/>
            <person name="Taylor K."/>
            <person name="Taylor R.G."/>
            <person name="Tivey A."/>
            <person name="Walsh S.V."/>
            <person name="Warren T."/>
            <person name="Whitehead S."/>
            <person name="Woodward J.R."/>
            <person name="Volckaert G."/>
            <person name="Aert R."/>
            <person name="Robben J."/>
            <person name="Grymonprez B."/>
            <person name="Weltjens I."/>
            <person name="Vanstreels E."/>
            <person name="Rieger M."/>
            <person name="Schaefer M."/>
            <person name="Mueller-Auer S."/>
            <person name="Gabel C."/>
            <person name="Fuchs M."/>
            <person name="Duesterhoeft A."/>
            <person name="Fritzc C."/>
            <person name="Holzer E."/>
            <person name="Moestl D."/>
            <person name="Hilbert H."/>
            <person name="Borzym K."/>
            <person name="Langer I."/>
            <person name="Beck A."/>
            <person name="Lehrach H."/>
            <person name="Reinhardt R."/>
            <person name="Pohl T.M."/>
            <person name="Eger P."/>
            <person name="Zimmermann W."/>
            <person name="Wedler H."/>
            <person name="Wambutt R."/>
            <person name="Purnelle B."/>
            <person name="Goffeau A."/>
            <person name="Cadieu E."/>
            <person name="Dreano S."/>
            <person name="Gloux S."/>
            <person name="Lelaure V."/>
            <person name="Mottier S."/>
            <person name="Galibert F."/>
            <person name="Aves S.J."/>
            <person name="Xiang Z."/>
            <person name="Hunt C."/>
            <person name="Moore K."/>
            <person name="Hurst S.M."/>
            <person name="Lucas M."/>
            <person name="Rochet M."/>
            <person name="Gaillardin C."/>
            <person name="Tallada V.A."/>
            <person name="Garzon A."/>
            <person name="Thode G."/>
            <person name="Daga R.R."/>
            <person name="Cruzado L."/>
            <person name="Jimenez J."/>
            <person name="Sanchez M."/>
            <person name="del Rey F."/>
            <person name="Benito J."/>
            <person name="Dominguez A."/>
            <person name="Revuelta J.L."/>
            <person name="Moreno S."/>
            <person name="Armstrong J."/>
            <person name="Forsburg S.L."/>
            <person name="Cerutti L."/>
            <person name="Lowe T."/>
            <person name="McCombie W.R."/>
            <person name="Paulsen I."/>
            <person name="Potashkin J."/>
            <person name="Shpakovski G.V."/>
            <person name="Ussery D."/>
            <person name="Barrell B.G."/>
            <person name="Nurse P."/>
        </authorList>
    </citation>
    <scope>NUCLEOTIDE SEQUENCE [LARGE SCALE GENOMIC DNA]</scope>
    <source>
        <strain>972 / ATCC 24843</strain>
    </source>
</reference>
<reference key="3">
    <citation type="journal article" date="2002" name="Curr. Biol.">
        <title>Proteomics analysis identifies new components of the fission and budding yeast anaphase-promoting complexes.</title>
        <authorList>
            <person name="Yoon H.-J."/>
            <person name="Feoktistova A."/>
            <person name="Wolfe B.A."/>
            <person name="Jennings J.L."/>
            <person name="Link A.J."/>
            <person name="Gould K.L."/>
        </authorList>
    </citation>
    <scope>SUBUNIT</scope>
</reference>
<keyword id="KW-0131">Cell cycle</keyword>
<keyword id="KW-0132">Cell division</keyword>
<keyword id="KW-0479">Metal-binding</keyword>
<keyword id="KW-0498">Mitosis</keyword>
<keyword id="KW-1185">Reference proteome</keyword>
<keyword id="KW-0833">Ubl conjugation pathway</keyword>
<keyword id="KW-0862">Zinc</keyword>
<keyword id="KW-0863">Zinc-finger</keyword>
<name>APC11_SCHPO</name>
<organism>
    <name type="scientific">Schizosaccharomyces pombe (strain 972 / ATCC 24843)</name>
    <name type="common">Fission yeast</name>
    <dbReference type="NCBI Taxonomy" id="284812"/>
    <lineage>
        <taxon>Eukaryota</taxon>
        <taxon>Fungi</taxon>
        <taxon>Dikarya</taxon>
        <taxon>Ascomycota</taxon>
        <taxon>Taphrinomycotina</taxon>
        <taxon>Schizosaccharomycetes</taxon>
        <taxon>Schizosaccharomycetales</taxon>
        <taxon>Schizosaccharomycetaceae</taxon>
        <taxon>Schizosaccharomyces</taxon>
    </lineage>
</organism>
<proteinExistence type="evidence at protein level"/>
<gene>
    <name type="primary">apc11</name>
    <name type="ORF">SPAC343.03</name>
</gene>